<evidence type="ECO:0000255" key="1">
    <source>
        <dbReference type="HAMAP-Rule" id="MF_00001"/>
    </source>
</evidence>
<gene>
    <name evidence="1" type="primary">pyrB</name>
    <name type="ordered locus">SAK_1134</name>
</gene>
<comment type="function">
    <text evidence="1">Catalyzes the condensation of carbamoyl phosphate and aspartate to form carbamoyl aspartate and inorganic phosphate, the committed step in the de novo pyrimidine nucleotide biosynthesis pathway.</text>
</comment>
<comment type="catalytic activity">
    <reaction evidence="1">
        <text>carbamoyl phosphate + L-aspartate = N-carbamoyl-L-aspartate + phosphate + H(+)</text>
        <dbReference type="Rhea" id="RHEA:20013"/>
        <dbReference type="ChEBI" id="CHEBI:15378"/>
        <dbReference type="ChEBI" id="CHEBI:29991"/>
        <dbReference type="ChEBI" id="CHEBI:32814"/>
        <dbReference type="ChEBI" id="CHEBI:43474"/>
        <dbReference type="ChEBI" id="CHEBI:58228"/>
        <dbReference type="EC" id="2.1.3.2"/>
    </reaction>
</comment>
<comment type="pathway">
    <text evidence="1">Pyrimidine metabolism; UMP biosynthesis via de novo pathway; (S)-dihydroorotate from bicarbonate: step 2/3.</text>
</comment>
<comment type="subunit">
    <text evidence="1">Heterododecamer (2C3:3R2) of six catalytic PyrB chains organized as two trimers (C3), and six regulatory PyrI chains organized as three dimers (R2).</text>
</comment>
<comment type="similarity">
    <text evidence="1">Belongs to the aspartate/ornithine carbamoyltransferase superfamily. ATCase family.</text>
</comment>
<feature type="chain" id="PRO_0000301627" description="Aspartate carbamoyltransferase catalytic subunit">
    <location>
        <begin position="1"/>
        <end position="307"/>
    </location>
</feature>
<feature type="binding site" evidence="1">
    <location>
        <position position="59"/>
    </location>
    <ligand>
        <name>carbamoyl phosphate</name>
        <dbReference type="ChEBI" id="CHEBI:58228"/>
    </ligand>
</feature>
<feature type="binding site" evidence="1">
    <location>
        <position position="60"/>
    </location>
    <ligand>
        <name>carbamoyl phosphate</name>
        <dbReference type="ChEBI" id="CHEBI:58228"/>
    </ligand>
</feature>
<feature type="binding site" evidence="1">
    <location>
        <position position="87"/>
    </location>
    <ligand>
        <name>L-aspartate</name>
        <dbReference type="ChEBI" id="CHEBI:29991"/>
    </ligand>
</feature>
<feature type="binding site" evidence="1">
    <location>
        <position position="109"/>
    </location>
    <ligand>
        <name>carbamoyl phosphate</name>
        <dbReference type="ChEBI" id="CHEBI:58228"/>
    </ligand>
</feature>
<feature type="binding site" evidence="1">
    <location>
        <position position="139"/>
    </location>
    <ligand>
        <name>carbamoyl phosphate</name>
        <dbReference type="ChEBI" id="CHEBI:58228"/>
    </ligand>
</feature>
<feature type="binding site" evidence="1">
    <location>
        <position position="142"/>
    </location>
    <ligand>
        <name>carbamoyl phosphate</name>
        <dbReference type="ChEBI" id="CHEBI:58228"/>
    </ligand>
</feature>
<feature type="binding site" evidence="1">
    <location>
        <position position="172"/>
    </location>
    <ligand>
        <name>L-aspartate</name>
        <dbReference type="ChEBI" id="CHEBI:29991"/>
    </ligand>
</feature>
<feature type="binding site" evidence="1">
    <location>
        <position position="224"/>
    </location>
    <ligand>
        <name>L-aspartate</name>
        <dbReference type="ChEBI" id="CHEBI:29991"/>
    </ligand>
</feature>
<feature type="binding site" evidence="1">
    <location>
        <position position="265"/>
    </location>
    <ligand>
        <name>carbamoyl phosphate</name>
        <dbReference type="ChEBI" id="CHEBI:58228"/>
    </ligand>
</feature>
<feature type="binding site" evidence="1">
    <location>
        <position position="266"/>
    </location>
    <ligand>
        <name>carbamoyl phosphate</name>
        <dbReference type="ChEBI" id="CHEBI:58228"/>
    </ligand>
</feature>
<organism>
    <name type="scientific">Streptococcus agalactiae serotype Ia (strain ATCC 27591 / A909 / CDC SS700)</name>
    <dbReference type="NCBI Taxonomy" id="205921"/>
    <lineage>
        <taxon>Bacteria</taxon>
        <taxon>Bacillati</taxon>
        <taxon>Bacillota</taxon>
        <taxon>Bacilli</taxon>
        <taxon>Lactobacillales</taxon>
        <taxon>Streptococcaceae</taxon>
        <taxon>Streptococcus</taxon>
    </lineage>
</organism>
<protein>
    <recommendedName>
        <fullName evidence="1">Aspartate carbamoyltransferase catalytic subunit</fullName>
        <ecNumber evidence="1">2.1.3.2</ecNumber>
    </recommendedName>
    <alternativeName>
        <fullName evidence="1">Aspartate transcarbamylase</fullName>
        <shortName evidence="1">ATCase</shortName>
    </alternativeName>
</protein>
<proteinExistence type="inferred from homology"/>
<reference key="1">
    <citation type="journal article" date="2005" name="Proc. Natl. Acad. Sci. U.S.A.">
        <title>Genome analysis of multiple pathogenic isolates of Streptococcus agalactiae: implications for the microbial 'pan-genome'.</title>
        <authorList>
            <person name="Tettelin H."/>
            <person name="Masignani V."/>
            <person name="Cieslewicz M.J."/>
            <person name="Donati C."/>
            <person name="Medini D."/>
            <person name="Ward N.L."/>
            <person name="Angiuoli S.V."/>
            <person name="Crabtree J."/>
            <person name="Jones A.L."/>
            <person name="Durkin A.S."/>
            <person name="DeBoy R.T."/>
            <person name="Davidsen T.M."/>
            <person name="Mora M."/>
            <person name="Scarselli M."/>
            <person name="Margarit y Ros I."/>
            <person name="Peterson J.D."/>
            <person name="Hauser C.R."/>
            <person name="Sundaram J.P."/>
            <person name="Nelson W.C."/>
            <person name="Madupu R."/>
            <person name="Brinkac L.M."/>
            <person name="Dodson R.J."/>
            <person name="Rosovitz M.J."/>
            <person name="Sullivan S.A."/>
            <person name="Daugherty S.C."/>
            <person name="Haft D.H."/>
            <person name="Selengut J."/>
            <person name="Gwinn M.L."/>
            <person name="Zhou L."/>
            <person name="Zafar N."/>
            <person name="Khouri H."/>
            <person name="Radune D."/>
            <person name="Dimitrov G."/>
            <person name="Watkins K."/>
            <person name="O'Connor K.J."/>
            <person name="Smith S."/>
            <person name="Utterback T.R."/>
            <person name="White O."/>
            <person name="Rubens C.E."/>
            <person name="Grandi G."/>
            <person name="Madoff L.C."/>
            <person name="Kasper D.L."/>
            <person name="Telford J.L."/>
            <person name="Wessels M.R."/>
            <person name="Rappuoli R."/>
            <person name="Fraser C.M."/>
        </authorList>
    </citation>
    <scope>NUCLEOTIDE SEQUENCE [LARGE SCALE GENOMIC DNA]</scope>
    <source>
        <strain>ATCC 27591 / A909 / CDC SS700</strain>
    </source>
</reference>
<accession>Q3K148</accession>
<name>PYRB_STRA1</name>
<sequence>MNHQTQTLSLEHFVSLEELSNQEVMSLIKRSIEVKENPSNIGFDKDYYVSNLFFENSTRTHKSFEMAELKLGLKTIEFNADTSSVNKGETLYDTILTMSALGLDVCVIRHPDIDYYKELIASPNIHSAIVNGGDGSGQHPSQSLLDLVTIYEEFGYFKGLKIAIVGDLTHSRVAKSNMQVLKRLGAEIFFSGPKEWYSSQFDEYGQYLPIDQLVDQIDVLMLLRVQHERHDGKGVFSKESYHQQFGLTKERYKHLRDTAIIMHPAPVNRDVEIASDLVEADKARIVKQMSNGVYARIAILEAVLNSR</sequence>
<dbReference type="EC" id="2.1.3.2" evidence="1"/>
<dbReference type="EMBL" id="CP000114">
    <property type="protein sequence ID" value="ABA45713.1"/>
    <property type="molecule type" value="Genomic_DNA"/>
</dbReference>
<dbReference type="RefSeq" id="WP_001016473.1">
    <property type="nucleotide sequence ID" value="NC_007432.1"/>
</dbReference>
<dbReference type="SMR" id="Q3K148"/>
<dbReference type="KEGG" id="sak:SAK_1134"/>
<dbReference type="HOGENOM" id="CLU_043846_2_1_9"/>
<dbReference type="UniPathway" id="UPA00070">
    <property type="reaction ID" value="UER00116"/>
</dbReference>
<dbReference type="GO" id="GO:0005829">
    <property type="term" value="C:cytosol"/>
    <property type="evidence" value="ECO:0007669"/>
    <property type="project" value="TreeGrafter"/>
</dbReference>
<dbReference type="GO" id="GO:0016597">
    <property type="term" value="F:amino acid binding"/>
    <property type="evidence" value="ECO:0007669"/>
    <property type="project" value="InterPro"/>
</dbReference>
<dbReference type="GO" id="GO:0004070">
    <property type="term" value="F:aspartate carbamoyltransferase activity"/>
    <property type="evidence" value="ECO:0007669"/>
    <property type="project" value="UniProtKB-UniRule"/>
</dbReference>
<dbReference type="GO" id="GO:0006207">
    <property type="term" value="P:'de novo' pyrimidine nucleobase biosynthetic process"/>
    <property type="evidence" value="ECO:0007669"/>
    <property type="project" value="InterPro"/>
</dbReference>
<dbReference type="GO" id="GO:0044205">
    <property type="term" value="P:'de novo' UMP biosynthetic process"/>
    <property type="evidence" value="ECO:0007669"/>
    <property type="project" value="UniProtKB-UniRule"/>
</dbReference>
<dbReference type="GO" id="GO:0006520">
    <property type="term" value="P:amino acid metabolic process"/>
    <property type="evidence" value="ECO:0007669"/>
    <property type="project" value="InterPro"/>
</dbReference>
<dbReference type="FunFam" id="3.40.50.1370:FF:000011">
    <property type="entry name" value="Aspartate carbamoyltransferase"/>
    <property type="match status" value="1"/>
</dbReference>
<dbReference type="Gene3D" id="3.40.50.1370">
    <property type="entry name" value="Aspartate/ornithine carbamoyltransferase"/>
    <property type="match status" value="2"/>
</dbReference>
<dbReference type="HAMAP" id="MF_00001">
    <property type="entry name" value="Asp_carb_tr"/>
    <property type="match status" value="1"/>
</dbReference>
<dbReference type="InterPro" id="IPR006132">
    <property type="entry name" value="Asp/Orn_carbamoyltranf_P-bd"/>
</dbReference>
<dbReference type="InterPro" id="IPR006130">
    <property type="entry name" value="Asp/Orn_carbamoylTrfase"/>
</dbReference>
<dbReference type="InterPro" id="IPR036901">
    <property type="entry name" value="Asp/Orn_carbamoylTrfase_sf"/>
</dbReference>
<dbReference type="InterPro" id="IPR002082">
    <property type="entry name" value="Asp_carbamoyltransf"/>
</dbReference>
<dbReference type="InterPro" id="IPR006131">
    <property type="entry name" value="Asp_carbamoyltransf_Asp/Orn-bd"/>
</dbReference>
<dbReference type="NCBIfam" id="TIGR00670">
    <property type="entry name" value="asp_carb_tr"/>
    <property type="match status" value="1"/>
</dbReference>
<dbReference type="NCBIfam" id="NF002032">
    <property type="entry name" value="PRK00856.1"/>
    <property type="match status" value="1"/>
</dbReference>
<dbReference type="PANTHER" id="PTHR45753:SF6">
    <property type="entry name" value="ASPARTATE CARBAMOYLTRANSFERASE"/>
    <property type="match status" value="1"/>
</dbReference>
<dbReference type="PANTHER" id="PTHR45753">
    <property type="entry name" value="ORNITHINE CARBAMOYLTRANSFERASE, MITOCHONDRIAL"/>
    <property type="match status" value="1"/>
</dbReference>
<dbReference type="Pfam" id="PF00185">
    <property type="entry name" value="OTCace"/>
    <property type="match status" value="1"/>
</dbReference>
<dbReference type="Pfam" id="PF02729">
    <property type="entry name" value="OTCace_N"/>
    <property type="match status" value="1"/>
</dbReference>
<dbReference type="PRINTS" id="PR00100">
    <property type="entry name" value="AOTCASE"/>
</dbReference>
<dbReference type="PRINTS" id="PR00101">
    <property type="entry name" value="ATCASE"/>
</dbReference>
<dbReference type="SUPFAM" id="SSF53671">
    <property type="entry name" value="Aspartate/ornithine carbamoyltransferase"/>
    <property type="match status" value="1"/>
</dbReference>
<dbReference type="PROSITE" id="PS00097">
    <property type="entry name" value="CARBAMOYLTRANSFERASE"/>
    <property type="match status" value="1"/>
</dbReference>
<keyword id="KW-0665">Pyrimidine biosynthesis</keyword>
<keyword id="KW-0808">Transferase</keyword>